<comment type="function">
    <text evidence="1">Cell wall formation. Catalyzes the transfer of a GlcNAc subunit on undecaprenyl-pyrophosphoryl-MurNAc-pentapeptide (lipid intermediate I) to form undecaprenyl-pyrophosphoryl-MurNAc-(pentapeptide)GlcNAc (lipid intermediate II).</text>
</comment>
<comment type="catalytic activity">
    <reaction evidence="1">
        <text>Mur2Ac(oyl-L-Ala-gamma-D-Glu-L-Lys-D-Ala-D-Ala)-di-trans,octa-cis-undecaprenyl diphosphate + UDP-N-acetyl-alpha-D-glucosamine = beta-D-GlcNAc-(1-&gt;4)-Mur2Ac(oyl-L-Ala-gamma-D-Glu-L-Lys-D-Ala-D-Ala)-di-trans,octa-cis-undecaprenyl diphosphate + UDP + H(+)</text>
        <dbReference type="Rhea" id="RHEA:23192"/>
        <dbReference type="ChEBI" id="CHEBI:15378"/>
        <dbReference type="ChEBI" id="CHEBI:57705"/>
        <dbReference type="ChEBI" id="CHEBI:58223"/>
        <dbReference type="ChEBI" id="CHEBI:60032"/>
        <dbReference type="ChEBI" id="CHEBI:60033"/>
        <dbReference type="EC" id="2.4.1.227"/>
    </reaction>
</comment>
<comment type="pathway">
    <text evidence="1">Cell wall biogenesis; peptidoglycan biosynthesis.</text>
</comment>
<comment type="subcellular location">
    <subcellularLocation>
        <location evidence="1">Cell membrane</location>
        <topology evidence="1">Peripheral membrane protein</topology>
        <orientation evidence="1">Cytoplasmic side</orientation>
    </subcellularLocation>
</comment>
<comment type="similarity">
    <text evidence="1">Belongs to the glycosyltransferase 28 family. MurG subfamily.</text>
</comment>
<gene>
    <name evidence="1" type="primary">murG</name>
    <name type="ordered locus">SAS1360</name>
</gene>
<proteinExistence type="inferred from homology"/>
<dbReference type="EC" id="2.4.1.227" evidence="1"/>
<dbReference type="EMBL" id="BX571857">
    <property type="protein sequence ID" value="CAG43136.1"/>
    <property type="molecule type" value="Genomic_DNA"/>
</dbReference>
<dbReference type="RefSeq" id="WP_000160904.1">
    <property type="nucleotide sequence ID" value="NC_002953.3"/>
</dbReference>
<dbReference type="SMR" id="Q6G9E3"/>
<dbReference type="CAZy" id="GT28">
    <property type="family name" value="Glycosyltransferase Family 28"/>
</dbReference>
<dbReference type="KEGG" id="sas:SAS1360"/>
<dbReference type="HOGENOM" id="CLU_037404_0_0_9"/>
<dbReference type="UniPathway" id="UPA00219"/>
<dbReference type="GO" id="GO:0005886">
    <property type="term" value="C:plasma membrane"/>
    <property type="evidence" value="ECO:0007669"/>
    <property type="project" value="UniProtKB-SubCell"/>
</dbReference>
<dbReference type="GO" id="GO:0050511">
    <property type="term" value="F:undecaprenyldiphospho-muramoylpentapeptide beta-N-acetylglucosaminyltransferase activity"/>
    <property type="evidence" value="ECO:0007669"/>
    <property type="project" value="UniProtKB-UniRule"/>
</dbReference>
<dbReference type="GO" id="GO:0005975">
    <property type="term" value="P:carbohydrate metabolic process"/>
    <property type="evidence" value="ECO:0007669"/>
    <property type="project" value="InterPro"/>
</dbReference>
<dbReference type="GO" id="GO:0051301">
    <property type="term" value="P:cell division"/>
    <property type="evidence" value="ECO:0007669"/>
    <property type="project" value="UniProtKB-KW"/>
</dbReference>
<dbReference type="GO" id="GO:0071555">
    <property type="term" value="P:cell wall organization"/>
    <property type="evidence" value="ECO:0007669"/>
    <property type="project" value="UniProtKB-KW"/>
</dbReference>
<dbReference type="GO" id="GO:0030259">
    <property type="term" value="P:lipid glycosylation"/>
    <property type="evidence" value="ECO:0007669"/>
    <property type="project" value="UniProtKB-UniRule"/>
</dbReference>
<dbReference type="GO" id="GO:0009252">
    <property type="term" value="P:peptidoglycan biosynthetic process"/>
    <property type="evidence" value="ECO:0007669"/>
    <property type="project" value="UniProtKB-UniRule"/>
</dbReference>
<dbReference type="GO" id="GO:0008360">
    <property type="term" value="P:regulation of cell shape"/>
    <property type="evidence" value="ECO:0007669"/>
    <property type="project" value="UniProtKB-KW"/>
</dbReference>
<dbReference type="CDD" id="cd03785">
    <property type="entry name" value="GT28_MurG"/>
    <property type="match status" value="1"/>
</dbReference>
<dbReference type="Gene3D" id="3.40.50.2000">
    <property type="entry name" value="Glycogen Phosphorylase B"/>
    <property type="match status" value="2"/>
</dbReference>
<dbReference type="HAMAP" id="MF_00033">
    <property type="entry name" value="MurG"/>
    <property type="match status" value="1"/>
</dbReference>
<dbReference type="InterPro" id="IPR006009">
    <property type="entry name" value="GlcNAc_MurG"/>
</dbReference>
<dbReference type="InterPro" id="IPR007235">
    <property type="entry name" value="Glyco_trans_28_C"/>
</dbReference>
<dbReference type="InterPro" id="IPR004276">
    <property type="entry name" value="GlycoTrans_28_N"/>
</dbReference>
<dbReference type="NCBIfam" id="NF009102">
    <property type="entry name" value="PRK12446.1"/>
    <property type="match status" value="1"/>
</dbReference>
<dbReference type="PANTHER" id="PTHR21015:SF27">
    <property type="entry name" value="UDP-N-ACETYLGLUCOSAMINE--N-ACETYLMURAMYL-(PENTAPEPTIDE) PYROPHOSPHORYL-UNDECAPRENOL N-ACETYLGLUCOSAMINE TRANSFERASE"/>
    <property type="match status" value="1"/>
</dbReference>
<dbReference type="PANTHER" id="PTHR21015">
    <property type="entry name" value="UDP-N-ACETYLGLUCOSAMINE--N-ACETYLMURAMYL-(PENTAPEPTIDE) PYROPHOSPHORYL-UNDECAPRENOL N-ACETYLGLUCOSAMINE TRANSFERASE 1"/>
    <property type="match status" value="1"/>
</dbReference>
<dbReference type="Pfam" id="PF04101">
    <property type="entry name" value="Glyco_tran_28_C"/>
    <property type="match status" value="1"/>
</dbReference>
<dbReference type="Pfam" id="PF03033">
    <property type="entry name" value="Glyco_transf_28"/>
    <property type="match status" value="1"/>
</dbReference>
<dbReference type="SUPFAM" id="SSF53756">
    <property type="entry name" value="UDP-Glycosyltransferase/glycogen phosphorylase"/>
    <property type="match status" value="1"/>
</dbReference>
<organism>
    <name type="scientific">Staphylococcus aureus (strain MSSA476)</name>
    <dbReference type="NCBI Taxonomy" id="282459"/>
    <lineage>
        <taxon>Bacteria</taxon>
        <taxon>Bacillati</taxon>
        <taxon>Bacillota</taxon>
        <taxon>Bacilli</taxon>
        <taxon>Bacillales</taxon>
        <taxon>Staphylococcaceae</taxon>
        <taxon>Staphylococcus</taxon>
    </lineage>
</organism>
<sequence>MTKIAFTGGGTVGHVSVNLSLIPTALSQGYEALYIGSKNGIEREMIESQLPEIKYYPISSGKLRRYISLENAKDVFKVLKGILDARKVLKKEKPDLLFSKGGFVSVPVVIAAKSLNIPTIIHESDLTPGLANKIALKFAKKIYTTFEETLNYLPKEKADFIGATIREDLKNGNAHNGYQLTGFNENKKVLLVMGGSLGSKKLNSIIRENLDALLQQYQVIHLTGKGLKDAQVKKSGYIQYEFVKEDLTDLLAITDTVISRAGSNAIYEFLTLRIPMLLVPLGLDQSRGDQIDNANHFADKGYAKAIDEEQLTAQILLQELNEMEQERTRIINNMKSYEQSYTKEALFDKMIKDALN</sequence>
<reference key="1">
    <citation type="journal article" date="2004" name="Proc. Natl. Acad. Sci. U.S.A.">
        <title>Complete genomes of two clinical Staphylococcus aureus strains: evidence for the rapid evolution of virulence and drug resistance.</title>
        <authorList>
            <person name="Holden M.T.G."/>
            <person name="Feil E.J."/>
            <person name="Lindsay J.A."/>
            <person name="Peacock S.J."/>
            <person name="Day N.P.J."/>
            <person name="Enright M.C."/>
            <person name="Foster T.J."/>
            <person name="Moore C.E."/>
            <person name="Hurst L."/>
            <person name="Atkin R."/>
            <person name="Barron A."/>
            <person name="Bason N."/>
            <person name="Bentley S.D."/>
            <person name="Chillingworth C."/>
            <person name="Chillingworth T."/>
            <person name="Churcher C."/>
            <person name="Clark L."/>
            <person name="Corton C."/>
            <person name="Cronin A."/>
            <person name="Doggett J."/>
            <person name="Dowd L."/>
            <person name="Feltwell T."/>
            <person name="Hance Z."/>
            <person name="Harris B."/>
            <person name="Hauser H."/>
            <person name="Holroyd S."/>
            <person name="Jagels K."/>
            <person name="James K.D."/>
            <person name="Lennard N."/>
            <person name="Line A."/>
            <person name="Mayes R."/>
            <person name="Moule S."/>
            <person name="Mungall K."/>
            <person name="Ormond D."/>
            <person name="Quail M.A."/>
            <person name="Rabbinowitsch E."/>
            <person name="Rutherford K.M."/>
            <person name="Sanders M."/>
            <person name="Sharp S."/>
            <person name="Simmonds M."/>
            <person name="Stevens K."/>
            <person name="Whitehead S."/>
            <person name="Barrell B.G."/>
            <person name="Spratt B.G."/>
            <person name="Parkhill J."/>
        </authorList>
    </citation>
    <scope>NUCLEOTIDE SEQUENCE [LARGE SCALE GENOMIC DNA]</scope>
    <source>
        <strain>MSSA476</strain>
    </source>
</reference>
<protein>
    <recommendedName>
        <fullName evidence="1">UDP-N-acetylglucosamine--N-acetylmuramyl-(pentapeptide) pyrophosphoryl-undecaprenol N-acetylglucosamine transferase</fullName>
        <ecNumber evidence="1">2.4.1.227</ecNumber>
    </recommendedName>
    <alternativeName>
        <fullName evidence="1">Undecaprenyl-PP-MurNAc-pentapeptide-UDPGlcNAc GlcNAc transferase</fullName>
    </alternativeName>
</protein>
<name>MURG_STAAS</name>
<accession>Q6G9E3</accession>
<keyword id="KW-0131">Cell cycle</keyword>
<keyword id="KW-0132">Cell division</keyword>
<keyword id="KW-1003">Cell membrane</keyword>
<keyword id="KW-0133">Cell shape</keyword>
<keyword id="KW-0961">Cell wall biogenesis/degradation</keyword>
<keyword id="KW-0328">Glycosyltransferase</keyword>
<keyword id="KW-0472">Membrane</keyword>
<keyword id="KW-0573">Peptidoglycan synthesis</keyword>
<keyword id="KW-0808">Transferase</keyword>
<evidence type="ECO:0000255" key="1">
    <source>
        <dbReference type="HAMAP-Rule" id="MF_00033"/>
    </source>
</evidence>
<feature type="chain" id="PRO_0000109214" description="UDP-N-acetylglucosamine--N-acetylmuramyl-(pentapeptide) pyrophosphoryl-undecaprenol N-acetylglucosamine transferase">
    <location>
        <begin position="1"/>
        <end position="356"/>
    </location>
</feature>
<feature type="binding site" evidence="1">
    <location>
        <position position="166"/>
    </location>
    <ligand>
        <name>UDP-N-acetyl-alpha-D-glucosamine</name>
        <dbReference type="ChEBI" id="CHEBI:57705"/>
    </ligand>
</feature>
<feature type="binding site" evidence="1">
    <location>
        <position position="196"/>
    </location>
    <ligand>
        <name>UDP-N-acetyl-alpha-D-glucosamine</name>
        <dbReference type="ChEBI" id="CHEBI:57705"/>
    </ligand>
</feature>
<feature type="binding site" evidence="1">
    <location>
        <position position="290"/>
    </location>
    <ligand>
        <name>UDP-N-acetyl-alpha-D-glucosamine</name>
        <dbReference type="ChEBI" id="CHEBI:57705"/>
    </ligand>
</feature>